<gene>
    <name type="primary">RBD2</name>
    <name type="ORF">FGRRES_07954</name>
    <name type="ORF">FGSG_07954</name>
</gene>
<accession>Q4I4A4</accession>
<accession>A0A0E0SGR3</accession>
<accession>V6RK06</accession>
<keyword id="KW-0333">Golgi apparatus</keyword>
<keyword id="KW-0378">Hydrolase</keyword>
<keyword id="KW-0472">Membrane</keyword>
<keyword id="KW-0645">Protease</keyword>
<keyword id="KW-1185">Reference proteome</keyword>
<keyword id="KW-0720">Serine protease</keyword>
<keyword id="KW-0812">Transmembrane</keyword>
<keyword id="KW-1133">Transmembrane helix</keyword>
<comment type="function">
    <text evidence="2">Probable rhomboid-type serine protease that catalyzes intramembrane proteolysis.</text>
</comment>
<comment type="catalytic activity">
    <reaction evidence="2">
        <text>Cleaves type-1 transmembrane domains using a catalytic dyad composed of serine and histidine that are contributed by different transmembrane domains.</text>
        <dbReference type="EC" id="3.4.21.105"/>
    </reaction>
</comment>
<comment type="subcellular location">
    <subcellularLocation>
        <location evidence="1">Golgi apparatus membrane</location>
        <topology evidence="1">Multi-pass membrane protein</topology>
    </subcellularLocation>
    <subcellularLocation>
        <location evidence="1">Golgi apparatus</location>
        <location evidence="1">cis-Golgi network membrane</location>
        <topology evidence="1">Multi-pass membrane protein</topology>
    </subcellularLocation>
</comment>
<comment type="similarity">
    <text evidence="5">Belongs to the peptidase S54 family.</text>
</comment>
<protein>
    <recommendedName>
        <fullName evidence="5">Rhomboid-type serine protease 2</fullName>
        <ecNumber evidence="2">3.4.21.105</ecNumber>
    </recommendedName>
    <alternativeName>
        <fullName evidence="5">Rhomboid protein 2</fullName>
    </alternativeName>
</protein>
<organism>
    <name type="scientific">Gibberella zeae (strain ATCC MYA-4620 / CBS 123657 / FGSC 9075 / NRRL 31084 / PH-1)</name>
    <name type="common">Wheat head blight fungus</name>
    <name type="synonym">Fusarium graminearum</name>
    <dbReference type="NCBI Taxonomy" id="229533"/>
    <lineage>
        <taxon>Eukaryota</taxon>
        <taxon>Fungi</taxon>
        <taxon>Dikarya</taxon>
        <taxon>Ascomycota</taxon>
        <taxon>Pezizomycotina</taxon>
        <taxon>Sordariomycetes</taxon>
        <taxon>Hypocreomycetidae</taxon>
        <taxon>Hypocreales</taxon>
        <taxon>Nectriaceae</taxon>
        <taxon>Fusarium</taxon>
    </lineage>
</organism>
<feature type="chain" id="PRO_0000206187" description="Rhomboid-type serine protease 2">
    <location>
        <begin position="1"/>
        <end position="267"/>
    </location>
</feature>
<feature type="transmembrane region" description="Helical" evidence="3">
    <location>
        <begin position="20"/>
        <end position="40"/>
    </location>
</feature>
<feature type="transmembrane region" description="Helical" evidence="3">
    <location>
        <begin position="67"/>
        <end position="87"/>
    </location>
</feature>
<feature type="transmembrane region" description="Helical" evidence="3">
    <location>
        <begin position="99"/>
        <end position="119"/>
    </location>
</feature>
<feature type="transmembrane region" description="Helical" evidence="3">
    <location>
        <begin position="126"/>
        <end position="146"/>
    </location>
</feature>
<feature type="transmembrane region" description="Helical" evidence="3">
    <location>
        <begin position="155"/>
        <end position="179"/>
    </location>
</feature>
<feature type="transmembrane region" description="Helical" evidence="3">
    <location>
        <begin position="185"/>
        <end position="206"/>
    </location>
</feature>
<feature type="region of interest" description="Disordered" evidence="4">
    <location>
        <begin position="247"/>
        <end position="267"/>
    </location>
</feature>
<feature type="active site" description="Nucleophile" evidence="2">
    <location>
        <position position="134"/>
    </location>
</feature>
<feature type="active site" evidence="2">
    <location>
        <position position="187"/>
    </location>
</feature>
<dbReference type="EC" id="3.4.21.105" evidence="2"/>
<dbReference type="EMBL" id="DS231666">
    <property type="protein sequence ID" value="ESU14292.1"/>
    <property type="molecule type" value="Genomic_DNA"/>
</dbReference>
<dbReference type="EMBL" id="HG970335">
    <property type="protein sequence ID" value="CEF85626.1"/>
    <property type="molecule type" value="Genomic_DNA"/>
</dbReference>
<dbReference type="RefSeq" id="XP_011327799.1">
    <property type="nucleotide sequence ID" value="XM_011329497.1"/>
</dbReference>
<dbReference type="FunCoup" id="Q4I4A4">
    <property type="interactions" value="64"/>
</dbReference>
<dbReference type="STRING" id="229533.Q4I4A4"/>
<dbReference type="GeneID" id="23554997"/>
<dbReference type="KEGG" id="fgr:FGSG_07954"/>
<dbReference type="VEuPathDB" id="FungiDB:FGRAMPH1_01G26067"/>
<dbReference type="eggNOG" id="KOG2632">
    <property type="taxonomic scope" value="Eukaryota"/>
</dbReference>
<dbReference type="HOGENOM" id="CLU_084816_0_0_1"/>
<dbReference type="InParanoid" id="Q4I4A4"/>
<dbReference type="OrthoDB" id="92169at110618"/>
<dbReference type="Proteomes" id="UP000070720">
    <property type="component" value="Chromosome 4"/>
</dbReference>
<dbReference type="GO" id="GO:0000139">
    <property type="term" value="C:Golgi membrane"/>
    <property type="evidence" value="ECO:0007669"/>
    <property type="project" value="UniProtKB-SubCell"/>
</dbReference>
<dbReference type="GO" id="GO:0004252">
    <property type="term" value="F:serine-type endopeptidase activity"/>
    <property type="evidence" value="ECO:0007669"/>
    <property type="project" value="InterPro"/>
</dbReference>
<dbReference type="GO" id="GO:0006508">
    <property type="term" value="P:proteolysis"/>
    <property type="evidence" value="ECO:0007669"/>
    <property type="project" value="UniProtKB-KW"/>
</dbReference>
<dbReference type="Gene3D" id="1.20.1540.10">
    <property type="entry name" value="Rhomboid-like"/>
    <property type="match status" value="1"/>
</dbReference>
<dbReference type="InterPro" id="IPR022764">
    <property type="entry name" value="Peptidase_S54_rhomboid_dom"/>
</dbReference>
<dbReference type="InterPro" id="IPR035952">
    <property type="entry name" value="Rhomboid-like_sf"/>
</dbReference>
<dbReference type="PANTHER" id="PTHR43066:SF1">
    <property type="entry name" value="RHOMBOID PROTEIN 2"/>
    <property type="match status" value="1"/>
</dbReference>
<dbReference type="PANTHER" id="PTHR43066">
    <property type="entry name" value="RHOMBOID-RELATED PROTEIN"/>
    <property type="match status" value="1"/>
</dbReference>
<dbReference type="Pfam" id="PF01694">
    <property type="entry name" value="Rhomboid"/>
    <property type="match status" value="1"/>
</dbReference>
<dbReference type="SUPFAM" id="SSF144091">
    <property type="entry name" value="Rhomboid-like"/>
    <property type="match status" value="1"/>
</dbReference>
<evidence type="ECO:0000250" key="1"/>
<evidence type="ECO:0000250" key="2">
    <source>
        <dbReference type="UniProtKB" id="O74926"/>
    </source>
</evidence>
<evidence type="ECO:0000255" key="3"/>
<evidence type="ECO:0000256" key="4">
    <source>
        <dbReference type="SAM" id="MobiDB-lite"/>
    </source>
</evidence>
<evidence type="ECO:0000305" key="5"/>
<proteinExistence type="inferred from homology"/>
<name>RBD2_GIBZE</name>
<sequence>MRPRLQNFNALRARSYLTRLPLFTRLIVLAIIALSIASLQSVWNLREWGALIPEEISITNAYRLSTFPLIHLNVIHAILNLLALTPLMERFETEHGTLTSLALFFGPLTSIPAVAYVLIERCIFRANHGVLGASMWVFTLLAMESIQTYKSNPHFVIGSVNIPTWTTPLIMSLVVAALIPGTSLLGHLCGIAIGYVAGFGYAKLLAPPEWGLRWVENRLNLLKILPHYVSIDKTTYGRFGVLPTTNRPGPSGSAATELVGTTQRLGP</sequence>
<reference key="1">
    <citation type="journal article" date="2007" name="Science">
        <title>The Fusarium graminearum genome reveals a link between localized polymorphism and pathogen specialization.</title>
        <authorList>
            <person name="Cuomo C.A."/>
            <person name="Gueldener U."/>
            <person name="Xu J.-R."/>
            <person name="Trail F."/>
            <person name="Turgeon B.G."/>
            <person name="Di Pietro A."/>
            <person name="Walton J.D."/>
            <person name="Ma L.-J."/>
            <person name="Baker S.E."/>
            <person name="Rep M."/>
            <person name="Adam G."/>
            <person name="Antoniw J."/>
            <person name="Baldwin T."/>
            <person name="Calvo S.E."/>
            <person name="Chang Y.-L."/>
            <person name="DeCaprio D."/>
            <person name="Gale L.R."/>
            <person name="Gnerre S."/>
            <person name="Goswami R.S."/>
            <person name="Hammond-Kosack K."/>
            <person name="Harris L.J."/>
            <person name="Hilburn K."/>
            <person name="Kennell J.C."/>
            <person name="Kroken S."/>
            <person name="Magnuson J.K."/>
            <person name="Mannhaupt G."/>
            <person name="Mauceli E.W."/>
            <person name="Mewes H.-W."/>
            <person name="Mitterbauer R."/>
            <person name="Muehlbauer G."/>
            <person name="Muensterkoetter M."/>
            <person name="Nelson D."/>
            <person name="O'Donnell K."/>
            <person name="Ouellet T."/>
            <person name="Qi W."/>
            <person name="Quesneville H."/>
            <person name="Roncero M.I.G."/>
            <person name="Seong K.-Y."/>
            <person name="Tetko I.V."/>
            <person name="Urban M."/>
            <person name="Waalwijk C."/>
            <person name="Ward T.J."/>
            <person name="Yao J."/>
            <person name="Birren B.W."/>
            <person name="Kistler H.C."/>
        </authorList>
    </citation>
    <scope>NUCLEOTIDE SEQUENCE [LARGE SCALE GENOMIC DNA]</scope>
    <source>
        <strain>ATCC MYA-4620 / CBS 123657 / FGSC 9075 / NRRL 31084 / PH-1</strain>
    </source>
</reference>
<reference key="2">
    <citation type="journal article" date="2010" name="Nature">
        <title>Comparative genomics reveals mobile pathogenicity chromosomes in Fusarium.</title>
        <authorList>
            <person name="Ma L.-J."/>
            <person name="van der Does H.C."/>
            <person name="Borkovich K.A."/>
            <person name="Coleman J.J."/>
            <person name="Daboussi M.-J."/>
            <person name="Di Pietro A."/>
            <person name="Dufresne M."/>
            <person name="Freitag M."/>
            <person name="Grabherr M."/>
            <person name="Henrissat B."/>
            <person name="Houterman P.M."/>
            <person name="Kang S."/>
            <person name="Shim W.-B."/>
            <person name="Woloshuk C."/>
            <person name="Xie X."/>
            <person name="Xu J.-R."/>
            <person name="Antoniw J."/>
            <person name="Baker S.E."/>
            <person name="Bluhm B.H."/>
            <person name="Breakspear A."/>
            <person name="Brown D.W."/>
            <person name="Butchko R.A.E."/>
            <person name="Chapman S."/>
            <person name="Coulson R."/>
            <person name="Coutinho P.M."/>
            <person name="Danchin E.G.J."/>
            <person name="Diener A."/>
            <person name="Gale L.R."/>
            <person name="Gardiner D.M."/>
            <person name="Goff S."/>
            <person name="Hammond-Kosack K.E."/>
            <person name="Hilburn K."/>
            <person name="Hua-Van A."/>
            <person name="Jonkers W."/>
            <person name="Kazan K."/>
            <person name="Kodira C.D."/>
            <person name="Koehrsen M."/>
            <person name="Kumar L."/>
            <person name="Lee Y.-H."/>
            <person name="Li L."/>
            <person name="Manners J.M."/>
            <person name="Miranda-Saavedra D."/>
            <person name="Mukherjee M."/>
            <person name="Park G."/>
            <person name="Park J."/>
            <person name="Park S.-Y."/>
            <person name="Proctor R.H."/>
            <person name="Regev A."/>
            <person name="Ruiz-Roldan M.C."/>
            <person name="Sain D."/>
            <person name="Sakthikumar S."/>
            <person name="Sykes S."/>
            <person name="Schwartz D.C."/>
            <person name="Turgeon B.G."/>
            <person name="Wapinski I."/>
            <person name="Yoder O."/>
            <person name="Young S."/>
            <person name="Zeng Q."/>
            <person name="Zhou S."/>
            <person name="Galagan J."/>
            <person name="Cuomo C.A."/>
            <person name="Kistler H.C."/>
            <person name="Rep M."/>
        </authorList>
    </citation>
    <scope>GENOME REANNOTATION</scope>
    <source>
        <strain>ATCC MYA-4620 / CBS 123657 / FGSC 9075 / NRRL 31084 / PH-1</strain>
    </source>
</reference>
<reference key="3">
    <citation type="journal article" date="2015" name="BMC Genomics">
        <title>The completed genome sequence of the pathogenic ascomycete fungus Fusarium graminearum.</title>
        <authorList>
            <person name="King R."/>
            <person name="Urban M."/>
            <person name="Hammond-Kosack M.C.U."/>
            <person name="Hassani-Pak K."/>
            <person name="Hammond-Kosack K.E."/>
        </authorList>
    </citation>
    <scope>NUCLEOTIDE SEQUENCE [LARGE SCALE GENOMIC DNA]</scope>
    <source>
        <strain>ATCC MYA-4620 / CBS 123657 / FGSC 9075 / NRRL 31084 / PH-1</strain>
    </source>
</reference>